<feature type="chain" id="PRO_0000219030" description="Nucleolar protein 56">
    <location>
        <begin position="1"/>
        <end position="504"/>
    </location>
</feature>
<feature type="domain" description="Nop" evidence="1">
    <location>
        <begin position="299"/>
        <end position="417"/>
    </location>
</feature>
<feature type="region of interest" description="Disordered" evidence="2">
    <location>
        <begin position="439"/>
        <end position="504"/>
    </location>
</feature>
<feature type="compositionally biased region" description="Basic and acidic residues" evidence="2">
    <location>
        <begin position="439"/>
        <end position="452"/>
    </location>
</feature>
<feature type="compositionally biased region" description="Basic residues" evidence="2">
    <location>
        <begin position="468"/>
        <end position="504"/>
    </location>
</feature>
<feature type="modified residue" description="Phosphoserine" evidence="7">
    <location>
        <position position="321"/>
    </location>
</feature>
<feature type="mutagenesis site" description="Reduced growth rate at all temperatures; when associated with R-385." evidence="5">
    <original>V</original>
    <variation>A</variation>
    <location>
        <position position="333"/>
    </location>
</feature>
<feature type="mutagenesis site" description="At 37 degrees, growth slows after 6 to 8 hours and cell division stops after 20 hours." evidence="5">
    <original>Y</original>
    <variation>C</variation>
    <location>
        <position position="355"/>
    </location>
</feature>
<feature type="mutagenesis site" description="Reduced growth rate at all temperatures; when associated with A-333." evidence="5">
    <original>M</original>
    <variation>R</variation>
    <location>
        <position position="385"/>
    </location>
</feature>
<feature type="strand" evidence="8">
    <location>
        <begin position="6"/>
        <end position="11"/>
    </location>
</feature>
<feature type="strand" evidence="8">
    <location>
        <begin position="14"/>
        <end position="20"/>
    </location>
</feature>
<feature type="helix" evidence="8">
    <location>
        <begin position="27"/>
        <end position="30"/>
    </location>
</feature>
<feature type="helix" evidence="8">
    <location>
        <begin position="31"/>
        <end position="38"/>
    </location>
</feature>
<feature type="helix" evidence="8">
    <location>
        <begin position="41"/>
        <end position="44"/>
    </location>
</feature>
<feature type="turn" evidence="8">
    <location>
        <begin position="45"/>
        <end position="47"/>
    </location>
</feature>
<feature type="strand" evidence="8">
    <location>
        <begin position="48"/>
        <end position="55"/>
    </location>
</feature>
<feature type="helix" evidence="8">
    <location>
        <begin position="59"/>
        <end position="70"/>
    </location>
</feature>
<feature type="helix" evidence="8">
    <location>
        <begin position="76"/>
        <end position="85"/>
    </location>
</feature>
<feature type="strand" evidence="8">
    <location>
        <begin position="96"/>
        <end position="99"/>
    </location>
</feature>
<feature type="helix" evidence="8">
    <location>
        <begin position="103"/>
        <end position="105"/>
    </location>
</feature>
<feature type="helix" evidence="8">
    <location>
        <begin position="106"/>
        <end position="112"/>
    </location>
</feature>
<feature type="strand" evidence="8">
    <location>
        <begin position="116"/>
        <end position="119"/>
    </location>
</feature>
<feature type="helix" evidence="8">
    <location>
        <begin position="122"/>
        <end position="134"/>
    </location>
</feature>
<feature type="helix" evidence="8">
    <location>
        <begin position="135"/>
        <end position="138"/>
    </location>
</feature>
<feature type="helix" evidence="8">
    <location>
        <begin position="146"/>
        <end position="163"/>
    </location>
</feature>
<proteinExistence type="evidence at protein level"/>
<protein>
    <recommendedName>
        <fullName>Nucleolar protein 56</fullName>
    </recommendedName>
    <alternativeName>
        <fullName>Ribosome biosynthesis protein SIK1</fullName>
    </alternativeName>
    <alternativeName>
        <fullName>Suppressor of I kappa b protein 1</fullName>
    </alternativeName>
</protein>
<accession>Q12460</accession>
<accession>D6VYK0</accession>
<keyword id="KW-0002">3D-structure</keyword>
<keyword id="KW-0539">Nucleus</keyword>
<keyword id="KW-0597">Phosphoprotein</keyword>
<keyword id="KW-1185">Reference proteome</keyword>
<keyword id="KW-0687">Ribonucleoprotein</keyword>
<keyword id="KW-0690">Ribosome biogenesis</keyword>
<reference key="1">
    <citation type="journal article" date="1995" name="Cell Growth Differ.">
        <title>Genetic analysis of growth inhibition by GAL4-L kappa B-alpha in Saccharomyces cerevisiae.</title>
        <authorList>
            <person name="Morin P.J."/>
            <person name="Downs J.A."/>
            <person name="Snodgrass A.M."/>
            <person name="Gilmore T.D."/>
        </authorList>
    </citation>
    <scope>NUCLEOTIDE SEQUENCE [GENOMIC DNA]</scope>
    <source>
        <strain>S288c / YPH1</strain>
    </source>
</reference>
<reference key="2">
    <citation type="journal article" date="1997" name="Nature">
        <title>The nucleotide sequence of Saccharomyces cerevisiae chromosome XII.</title>
        <authorList>
            <person name="Johnston M."/>
            <person name="Hillier L.W."/>
            <person name="Riles L."/>
            <person name="Albermann K."/>
            <person name="Andre B."/>
            <person name="Ansorge W."/>
            <person name="Benes V."/>
            <person name="Brueckner M."/>
            <person name="Delius H."/>
            <person name="Dubois E."/>
            <person name="Duesterhoeft A."/>
            <person name="Entian K.-D."/>
            <person name="Floeth M."/>
            <person name="Goffeau A."/>
            <person name="Hebling U."/>
            <person name="Heumann K."/>
            <person name="Heuss-Neitzel D."/>
            <person name="Hilbert H."/>
            <person name="Hilger F."/>
            <person name="Kleine K."/>
            <person name="Koetter P."/>
            <person name="Louis E.J."/>
            <person name="Messenguy F."/>
            <person name="Mewes H.-W."/>
            <person name="Miosga T."/>
            <person name="Moestl D."/>
            <person name="Mueller-Auer S."/>
            <person name="Nentwich U."/>
            <person name="Obermaier B."/>
            <person name="Piravandi E."/>
            <person name="Pohl T.M."/>
            <person name="Portetelle D."/>
            <person name="Purnelle B."/>
            <person name="Rechmann S."/>
            <person name="Rieger M."/>
            <person name="Rinke M."/>
            <person name="Rose M."/>
            <person name="Scharfe M."/>
            <person name="Scherens B."/>
            <person name="Scholler P."/>
            <person name="Schwager C."/>
            <person name="Schwarz S."/>
            <person name="Underwood A.P."/>
            <person name="Urrestarazu L.A."/>
            <person name="Vandenbol M."/>
            <person name="Verhasselt P."/>
            <person name="Vierendeels F."/>
            <person name="Voet M."/>
            <person name="Volckaert G."/>
            <person name="Voss H."/>
            <person name="Wambutt R."/>
            <person name="Wedler E."/>
            <person name="Wedler H."/>
            <person name="Zimmermann F.K."/>
            <person name="Zollner A."/>
            <person name="Hani J."/>
            <person name="Hoheisel J.D."/>
        </authorList>
    </citation>
    <scope>NUCLEOTIDE SEQUENCE [LARGE SCALE GENOMIC DNA]</scope>
    <source>
        <strain>ATCC 204508 / S288c</strain>
    </source>
</reference>
<reference key="3">
    <citation type="journal article" date="2014" name="G3 (Bethesda)">
        <title>The reference genome sequence of Saccharomyces cerevisiae: Then and now.</title>
        <authorList>
            <person name="Engel S.R."/>
            <person name="Dietrich F.S."/>
            <person name="Fisk D.G."/>
            <person name="Binkley G."/>
            <person name="Balakrishnan R."/>
            <person name="Costanzo M.C."/>
            <person name="Dwight S.S."/>
            <person name="Hitz B.C."/>
            <person name="Karra K."/>
            <person name="Nash R.S."/>
            <person name="Weng S."/>
            <person name="Wong E.D."/>
            <person name="Lloyd P."/>
            <person name="Skrzypek M.S."/>
            <person name="Miyasato S.R."/>
            <person name="Simison M."/>
            <person name="Cherry J.M."/>
        </authorList>
    </citation>
    <scope>GENOME REANNOTATION</scope>
    <source>
        <strain>ATCC 204508 / S288c</strain>
    </source>
</reference>
<reference key="4">
    <citation type="journal article" date="1997" name="Mol. Cell. Biol.">
        <title>Nucleolar KKE/D repeat proteins Nop56p and Nop58p interact with Nop1p and are required for ribosome biogenesis.</title>
        <authorList>
            <person name="Gautier T."/>
            <person name="Berges T."/>
            <person name="Tollervey D."/>
            <person name="Hurt E."/>
        </authorList>
    </citation>
    <scope>FUNCTION</scope>
    <scope>INTERACTION WITH NOP1 AND NOP58</scope>
    <scope>SUBCELLULAR LOCATION</scope>
    <scope>MUTAGENESIS OF VAL-333; TYR-355 AND MET-385</scope>
</reference>
<reference key="5">
    <citation type="journal article" date="2002" name="Nature">
        <title>A large nucleolar U3 ribonucleoprotein required for 18S ribosomal RNA biogenesis.</title>
        <authorList>
            <person name="Dragon F."/>
            <person name="Gallagher J.E.G."/>
            <person name="Compagnone-Post P.A."/>
            <person name="Mitchell B.M."/>
            <person name="Porwancher K.A."/>
            <person name="Wehner K.A."/>
            <person name="Wormsley S."/>
            <person name="Settlage R.E."/>
            <person name="Shabanowitz J."/>
            <person name="Osheim Y."/>
            <person name="Beyer A.L."/>
            <person name="Hunt D.F."/>
            <person name="Baserga S.J."/>
        </authorList>
    </citation>
    <scope>IDENTIFICATION IN SSU PROCESSOME BY MASS SPECTROMETRY</scope>
</reference>
<reference key="6">
    <citation type="journal article" date="2003" name="Nature">
        <title>Global analysis of protein expression in yeast.</title>
        <authorList>
            <person name="Ghaemmaghami S."/>
            <person name="Huh W.-K."/>
            <person name="Bower K."/>
            <person name="Howson R.W."/>
            <person name="Belle A."/>
            <person name="Dephoure N."/>
            <person name="O'Shea E.K."/>
            <person name="Weissman J.S."/>
        </authorList>
    </citation>
    <scope>LEVEL OF PROTEIN EXPRESSION [LARGE SCALE ANALYSIS]</scope>
</reference>
<reference key="7">
    <citation type="journal article" date="2008" name="Mol. Cell. Proteomics">
        <title>A multidimensional chromatography technology for in-depth phosphoproteome analysis.</title>
        <authorList>
            <person name="Albuquerque C.P."/>
            <person name="Smolka M.B."/>
            <person name="Payne S.H."/>
            <person name="Bafna V."/>
            <person name="Eng J."/>
            <person name="Zhou H."/>
        </authorList>
    </citation>
    <scope>PHOSPHORYLATION [LARGE SCALE ANALYSIS] AT SER-321</scope>
    <scope>IDENTIFICATION BY MASS SPECTROMETRY [LARGE SCALE ANALYSIS]</scope>
</reference>
<organism>
    <name type="scientific">Saccharomyces cerevisiae (strain ATCC 204508 / S288c)</name>
    <name type="common">Baker's yeast</name>
    <dbReference type="NCBI Taxonomy" id="559292"/>
    <lineage>
        <taxon>Eukaryota</taxon>
        <taxon>Fungi</taxon>
        <taxon>Dikarya</taxon>
        <taxon>Ascomycota</taxon>
        <taxon>Saccharomycotina</taxon>
        <taxon>Saccharomycetes</taxon>
        <taxon>Saccharomycetales</taxon>
        <taxon>Saccharomycetaceae</taxon>
        <taxon>Saccharomyces</taxon>
    </lineage>
</organism>
<evidence type="ECO:0000255" key="1">
    <source>
        <dbReference type="PROSITE-ProRule" id="PRU00690"/>
    </source>
</evidence>
<evidence type="ECO:0000256" key="2">
    <source>
        <dbReference type="SAM" id="MobiDB-lite"/>
    </source>
</evidence>
<evidence type="ECO:0000269" key="3">
    <source>
    </source>
</evidence>
<evidence type="ECO:0000269" key="4">
    <source>
    </source>
</evidence>
<evidence type="ECO:0000269" key="5">
    <source>
    </source>
</evidence>
<evidence type="ECO:0000305" key="6"/>
<evidence type="ECO:0007744" key="7">
    <source>
    </source>
</evidence>
<evidence type="ECO:0007829" key="8">
    <source>
        <dbReference type="PDB" id="6ZDT"/>
    </source>
</evidence>
<comment type="function">
    <text evidence="5">Required for 60S ribosomal subunit synthesis.</text>
</comment>
<comment type="subunit">
    <text evidence="3 5">Interacts with NOP1 and NOP58. Component of the ribosomal small subunit (SSU) processome composed of at least 40 protein subunits and snoRNA U3.</text>
</comment>
<comment type="interaction">
    <interactant intactId="EBI-17148">
        <id>Q12460</id>
    </interactant>
    <interactant intactId="EBI-6838">
        <id>P15646</id>
        <label>NOP1</label>
    </interactant>
    <organismsDiffer>false</organismsDiffer>
    <experiments>6</experiments>
</comment>
<comment type="interaction">
    <interactant intactId="EBI-17148">
        <id>Q12460</id>
    </interactant>
    <interactant intactId="EBI-12032">
        <id>P39990</id>
        <label>SNU13</label>
    </interactant>
    <organismsDiffer>false</organismsDiffer>
    <experiments>5</experiments>
</comment>
<comment type="subcellular location">
    <subcellularLocation>
        <location evidence="5">Nucleus</location>
        <location evidence="5">Nucleolus</location>
    </subcellularLocation>
</comment>
<comment type="miscellaneous">
    <text evidence="4">Present with 13500 molecules/cell in log phase SD medium.</text>
</comment>
<comment type="similarity">
    <text evidence="6">Belongs to the NOP5/NOP56 family.</text>
</comment>
<name>NOP56_YEAST</name>
<sequence>MAPIEYLLFEEPTGYAVFKVKLQQDDIGSRLKEVQEQINDFGAFTKLIELVSFAPFKGAAEALENANDISEGLVSESLKAILDLNLPKASSKKKNITLAISDKNLGPSIKEEFPYVDCISNELAQDLIRGVRLHGEKLFKGLQSGDLERAQLGLGHAYSRAKVKFSVQKNDNHIIQAIALLDQLDKDINTFAMRVKEWYGWHFPELAKLVPDNYTFAKLVLFIKDKASLNDDSLHDLAALLNEDSGIAQRVIDNARISMGQDISETDMENVCVFAQRVASLADYRRQLYDYLCEKMHTVAPNLSELIGEVIGARLISHAGSLTNLSKQAASTVQILGAEKALFRALKTKGNTPKYGLIYHSGFISKASAKNKGRISRYLANKCSMASRIDNYSEEPSNVFGSVLKKQVEQRLEFYNTGKPTLKNELAIQEAMELYNKDKPAAEVEETKEKESSKKRKLEDDDEEKKEKKEKKSKKEKKEKKEKKDKKEKKDKKEKKDKKKKSKD</sequence>
<dbReference type="EMBL" id="U20237">
    <property type="protein sequence ID" value="AAC49066.1"/>
    <property type="molecule type" value="Genomic_DNA"/>
</dbReference>
<dbReference type="EMBL" id="U14913">
    <property type="protein sequence ID" value="AAB67431.1"/>
    <property type="molecule type" value="Genomic_DNA"/>
</dbReference>
<dbReference type="EMBL" id="BK006945">
    <property type="protein sequence ID" value="DAA09516.1"/>
    <property type="molecule type" value="Genomic_DNA"/>
</dbReference>
<dbReference type="PIR" id="S48550">
    <property type="entry name" value="S48550"/>
</dbReference>
<dbReference type="RefSeq" id="NP_013298.1">
    <property type="nucleotide sequence ID" value="NM_001182084.1"/>
</dbReference>
<dbReference type="PDB" id="5WLC">
    <property type="method" value="EM"/>
    <property type="resolution" value="3.80 A"/>
    <property type="chains" value="SA=1-504"/>
</dbReference>
<dbReference type="PDB" id="5WYJ">
    <property type="method" value="EM"/>
    <property type="resolution" value="8.70 A"/>
    <property type="chains" value="3D=1-504"/>
</dbReference>
<dbReference type="PDB" id="5WYK">
    <property type="method" value="EM"/>
    <property type="resolution" value="4.50 A"/>
    <property type="chains" value="3D=1-504"/>
</dbReference>
<dbReference type="PDB" id="6KE6">
    <property type="method" value="EM"/>
    <property type="resolution" value="3.40 A"/>
    <property type="chains" value="3D=1-504"/>
</dbReference>
<dbReference type="PDB" id="6LQP">
    <property type="method" value="EM"/>
    <property type="resolution" value="3.20 A"/>
    <property type="chains" value="3D=1-504"/>
</dbReference>
<dbReference type="PDB" id="6LQQ">
    <property type="method" value="EM"/>
    <property type="resolution" value="4.10 A"/>
    <property type="chains" value="3D=1-504"/>
</dbReference>
<dbReference type="PDB" id="6LQR">
    <property type="method" value="EM"/>
    <property type="resolution" value="8.60 A"/>
    <property type="chains" value="3D=1-504"/>
</dbReference>
<dbReference type="PDB" id="6LQS">
    <property type="method" value="EM"/>
    <property type="resolution" value="3.80 A"/>
    <property type="chains" value="3D=1-504"/>
</dbReference>
<dbReference type="PDB" id="6LQT">
    <property type="method" value="EM"/>
    <property type="resolution" value="4.90 A"/>
    <property type="chains" value="3D=1-504"/>
</dbReference>
<dbReference type="PDB" id="6LQU">
    <property type="method" value="EM"/>
    <property type="resolution" value="3.70 A"/>
    <property type="chains" value="3D=1-504"/>
</dbReference>
<dbReference type="PDB" id="6LQV">
    <property type="method" value="EM"/>
    <property type="resolution" value="4.80 A"/>
    <property type="chains" value="3D=1-504"/>
</dbReference>
<dbReference type="PDB" id="6ND4">
    <property type="method" value="EM"/>
    <property type="resolution" value="4.30 A"/>
    <property type="chains" value="a=1-504"/>
</dbReference>
<dbReference type="PDB" id="6ZDT">
    <property type="method" value="X-ray"/>
    <property type="resolution" value="1.71 A"/>
    <property type="chains" value="B=1-166"/>
</dbReference>
<dbReference type="PDB" id="6ZQA">
    <property type="method" value="EM"/>
    <property type="resolution" value="4.40 A"/>
    <property type="chains" value="CD=1-504"/>
</dbReference>
<dbReference type="PDB" id="6ZQB">
    <property type="method" value="EM"/>
    <property type="resolution" value="3.90 A"/>
    <property type="chains" value="CD=1-504"/>
</dbReference>
<dbReference type="PDB" id="6ZQC">
    <property type="method" value="EM"/>
    <property type="resolution" value="3.80 A"/>
    <property type="chains" value="CD=1-504"/>
</dbReference>
<dbReference type="PDB" id="6ZQD">
    <property type="method" value="EM"/>
    <property type="resolution" value="3.80 A"/>
    <property type="chains" value="CD=1-504"/>
</dbReference>
<dbReference type="PDB" id="6ZQE">
    <property type="method" value="EM"/>
    <property type="resolution" value="7.10 A"/>
    <property type="chains" value="CD=1-504"/>
</dbReference>
<dbReference type="PDB" id="7AJT">
    <property type="method" value="EM"/>
    <property type="resolution" value="4.60 A"/>
    <property type="chains" value="CD=1-504"/>
</dbReference>
<dbReference type="PDB" id="7AJU">
    <property type="method" value="EM"/>
    <property type="resolution" value="3.80 A"/>
    <property type="chains" value="CD=1-504"/>
</dbReference>
<dbReference type="PDB" id="7D4I">
    <property type="method" value="EM"/>
    <property type="resolution" value="4.00 A"/>
    <property type="chains" value="3D=1-504"/>
</dbReference>
<dbReference type="PDB" id="7D5S">
    <property type="method" value="EM"/>
    <property type="resolution" value="4.60 A"/>
    <property type="chains" value="3D=1-504"/>
</dbReference>
<dbReference type="PDB" id="7D5T">
    <property type="method" value="EM"/>
    <property type="resolution" value="6.00 A"/>
    <property type="chains" value="3D=1-504"/>
</dbReference>
<dbReference type="PDB" id="7D63">
    <property type="method" value="EM"/>
    <property type="resolution" value="12.30 A"/>
    <property type="chains" value="3D=1-504"/>
</dbReference>
<dbReference type="PDB" id="7SUK">
    <property type="method" value="EM"/>
    <property type="resolution" value="3.99 A"/>
    <property type="chains" value="SA=3-415"/>
</dbReference>
<dbReference type="PDBsum" id="5WLC"/>
<dbReference type="PDBsum" id="5WYJ"/>
<dbReference type="PDBsum" id="5WYK"/>
<dbReference type="PDBsum" id="6KE6"/>
<dbReference type="PDBsum" id="6LQP"/>
<dbReference type="PDBsum" id="6LQQ"/>
<dbReference type="PDBsum" id="6LQR"/>
<dbReference type="PDBsum" id="6LQS"/>
<dbReference type="PDBsum" id="6LQT"/>
<dbReference type="PDBsum" id="6LQU"/>
<dbReference type="PDBsum" id="6LQV"/>
<dbReference type="PDBsum" id="6ND4"/>
<dbReference type="PDBsum" id="6ZDT"/>
<dbReference type="PDBsum" id="6ZQA"/>
<dbReference type="PDBsum" id="6ZQB"/>
<dbReference type="PDBsum" id="6ZQC"/>
<dbReference type="PDBsum" id="6ZQD"/>
<dbReference type="PDBsum" id="6ZQE"/>
<dbReference type="PDBsum" id="7AJT"/>
<dbReference type="PDBsum" id="7AJU"/>
<dbReference type="PDBsum" id="7D4I"/>
<dbReference type="PDBsum" id="7D5S"/>
<dbReference type="PDBsum" id="7D5T"/>
<dbReference type="PDBsum" id="7D63"/>
<dbReference type="PDBsum" id="7SUK"/>
<dbReference type="EMDB" id="EMD-0949"/>
<dbReference type="EMDB" id="EMD-0950"/>
<dbReference type="EMDB" id="EMD-0951"/>
<dbReference type="EMDB" id="EMD-0952"/>
<dbReference type="EMDB" id="EMD-0953"/>
<dbReference type="EMDB" id="EMD-0954"/>
<dbReference type="EMDB" id="EMD-0955"/>
<dbReference type="EMDB" id="EMD-11357"/>
<dbReference type="EMDB" id="EMD-11358"/>
<dbReference type="EMDB" id="EMD-11359"/>
<dbReference type="EMDB" id="EMD-11360"/>
<dbReference type="EMDB" id="EMD-11361"/>
<dbReference type="EMDB" id="EMD-11807"/>
<dbReference type="EMDB" id="EMD-11808"/>
<dbReference type="EMDB" id="EMD-25441"/>
<dbReference type="EMDB" id="EMD-30574"/>
<dbReference type="EMDB" id="EMD-30584"/>
<dbReference type="EMDB" id="EMD-30585"/>
<dbReference type="EMDB" id="EMD-30588"/>
<dbReference type="EMDB" id="EMD-6695"/>
<dbReference type="EMDB" id="EMD-6696"/>
<dbReference type="EMDB" id="EMD-8859"/>
<dbReference type="EMDB" id="EMD-9964"/>
<dbReference type="SMR" id="Q12460"/>
<dbReference type="BioGRID" id="31467">
    <property type="interactions" value="555"/>
</dbReference>
<dbReference type="ComplexPortal" id="CPX-1604">
    <property type="entry name" value="Small ribosomal subunit processome"/>
</dbReference>
<dbReference type="ComplexPortal" id="CPX-729">
    <property type="entry name" value="Box C/D snoRNP complex"/>
</dbReference>
<dbReference type="DIP" id="DIP-4405N"/>
<dbReference type="FunCoup" id="Q12460">
    <property type="interactions" value="1776"/>
</dbReference>
<dbReference type="IntAct" id="Q12460">
    <property type="interactions" value="121"/>
</dbReference>
<dbReference type="MINT" id="Q12460"/>
<dbReference type="STRING" id="4932.YLR197W"/>
<dbReference type="CarbonylDB" id="Q12460"/>
<dbReference type="iPTMnet" id="Q12460"/>
<dbReference type="PaxDb" id="4932-YLR197W"/>
<dbReference type="PeptideAtlas" id="Q12460"/>
<dbReference type="EnsemblFungi" id="YLR197W_mRNA">
    <property type="protein sequence ID" value="YLR197W"/>
    <property type="gene ID" value="YLR197W"/>
</dbReference>
<dbReference type="GeneID" id="850894"/>
<dbReference type="KEGG" id="sce:YLR197W"/>
<dbReference type="AGR" id="SGD:S000004187"/>
<dbReference type="SGD" id="S000004187">
    <property type="gene designation" value="NOP56"/>
</dbReference>
<dbReference type="VEuPathDB" id="FungiDB:YLR197W"/>
<dbReference type="eggNOG" id="KOG2573">
    <property type="taxonomic scope" value="Eukaryota"/>
</dbReference>
<dbReference type="GeneTree" id="ENSGT00940000153534"/>
<dbReference type="HOGENOM" id="CLU_015495_4_0_1"/>
<dbReference type="InParanoid" id="Q12460"/>
<dbReference type="OMA" id="PDNYMFA"/>
<dbReference type="OrthoDB" id="6780543at2759"/>
<dbReference type="BioCyc" id="YEAST:G3O-32318-MONOMER"/>
<dbReference type="Reactome" id="R-SCE-6791226">
    <property type="pathway name" value="Major pathway of rRNA processing in the nucleolus and cytosol"/>
</dbReference>
<dbReference type="BioGRID-ORCS" id="850894">
    <property type="hits" value="1 hit in 10 CRISPR screens"/>
</dbReference>
<dbReference type="CD-CODE" id="BDAE0F88">
    <property type="entry name" value="Nucleolus"/>
</dbReference>
<dbReference type="PRO" id="PR:Q12460"/>
<dbReference type="Proteomes" id="UP000002311">
    <property type="component" value="Chromosome XII"/>
</dbReference>
<dbReference type="RNAct" id="Q12460">
    <property type="molecule type" value="protein"/>
</dbReference>
<dbReference type="GO" id="GO:0030686">
    <property type="term" value="C:90S preribosome"/>
    <property type="evidence" value="ECO:0007005"/>
    <property type="project" value="SGD"/>
</dbReference>
<dbReference type="GO" id="GO:0031428">
    <property type="term" value="C:box C/D methylation guide snoRNP complex"/>
    <property type="evidence" value="ECO:0000314"/>
    <property type="project" value="SGD"/>
</dbReference>
<dbReference type="GO" id="GO:0005730">
    <property type="term" value="C:nucleolus"/>
    <property type="evidence" value="ECO:0000314"/>
    <property type="project" value="ComplexPortal"/>
</dbReference>
<dbReference type="GO" id="GO:0005654">
    <property type="term" value="C:nucleoplasm"/>
    <property type="evidence" value="ECO:0000304"/>
    <property type="project" value="Reactome"/>
</dbReference>
<dbReference type="GO" id="GO:0005634">
    <property type="term" value="C:nucleus"/>
    <property type="evidence" value="ECO:0007005"/>
    <property type="project" value="SGD"/>
</dbReference>
<dbReference type="GO" id="GO:0032040">
    <property type="term" value="C:small-subunit processome"/>
    <property type="evidence" value="ECO:0000314"/>
    <property type="project" value="SGD"/>
</dbReference>
<dbReference type="GO" id="GO:0003729">
    <property type="term" value="F:mRNA binding"/>
    <property type="evidence" value="ECO:0007005"/>
    <property type="project" value="SGD"/>
</dbReference>
<dbReference type="GO" id="GO:0030515">
    <property type="term" value="F:snoRNA binding"/>
    <property type="evidence" value="ECO:0000318"/>
    <property type="project" value="GO_Central"/>
</dbReference>
<dbReference type="GO" id="GO:0000494">
    <property type="term" value="P:box C/D sno(s)RNA 3'-end processing"/>
    <property type="evidence" value="ECO:0000314"/>
    <property type="project" value="ComplexPortal"/>
</dbReference>
<dbReference type="GO" id="GO:0030490">
    <property type="term" value="P:maturation of SSU-rRNA"/>
    <property type="evidence" value="ECO:0000303"/>
    <property type="project" value="ComplexPortal"/>
</dbReference>
<dbReference type="GO" id="GO:0000154">
    <property type="term" value="P:rRNA modification"/>
    <property type="evidence" value="ECO:0000304"/>
    <property type="project" value="SGD"/>
</dbReference>
<dbReference type="GO" id="GO:0006364">
    <property type="term" value="P:rRNA processing"/>
    <property type="evidence" value="ECO:0000315"/>
    <property type="project" value="SGD"/>
</dbReference>
<dbReference type="GO" id="GO:0000452">
    <property type="term" value="P:snoRNA guided rRNA 2'-O-methylation"/>
    <property type="evidence" value="ECO:0000314"/>
    <property type="project" value="ComplexPortal"/>
</dbReference>
<dbReference type="FunFam" id="1.10.246.90:FF:000001">
    <property type="entry name" value="Nucleolar protein 56"/>
    <property type="match status" value="1"/>
</dbReference>
<dbReference type="FunFam" id="1.10.287.4070:FF:000002">
    <property type="entry name" value="Nucleolar protein 56"/>
    <property type="match status" value="1"/>
</dbReference>
<dbReference type="Gene3D" id="1.10.287.4070">
    <property type="match status" value="1"/>
</dbReference>
<dbReference type="Gene3D" id="1.10.246.90">
    <property type="entry name" value="Nop domain"/>
    <property type="match status" value="1"/>
</dbReference>
<dbReference type="InterPro" id="IPR045056">
    <property type="entry name" value="Nop56/Nop58"/>
</dbReference>
<dbReference type="InterPro" id="IPR012974">
    <property type="entry name" value="NOP58/56_N"/>
</dbReference>
<dbReference type="InterPro" id="IPR042239">
    <property type="entry name" value="Nop_C"/>
</dbReference>
<dbReference type="InterPro" id="IPR002687">
    <property type="entry name" value="Nop_dom"/>
</dbReference>
<dbReference type="InterPro" id="IPR036070">
    <property type="entry name" value="Nop_dom_sf"/>
</dbReference>
<dbReference type="InterPro" id="IPR012976">
    <property type="entry name" value="NOSIC"/>
</dbReference>
<dbReference type="PANTHER" id="PTHR10894">
    <property type="entry name" value="NUCLEOLAR PROTEIN 5 NUCLEOLAR PROTEIN NOP5 NOP58"/>
    <property type="match status" value="1"/>
</dbReference>
<dbReference type="PANTHER" id="PTHR10894:SF0">
    <property type="entry name" value="NUCLEOLAR PROTEIN 56"/>
    <property type="match status" value="1"/>
</dbReference>
<dbReference type="Pfam" id="PF01798">
    <property type="entry name" value="Nop"/>
    <property type="match status" value="1"/>
</dbReference>
<dbReference type="Pfam" id="PF08156">
    <property type="entry name" value="NOP5NT"/>
    <property type="match status" value="1"/>
</dbReference>
<dbReference type="SMART" id="SM00931">
    <property type="entry name" value="NOSIC"/>
    <property type="match status" value="1"/>
</dbReference>
<dbReference type="SUPFAM" id="SSF89124">
    <property type="entry name" value="Nop domain"/>
    <property type="match status" value="1"/>
</dbReference>
<dbReference type="PROSITE" id="PS51358">
    <property type="entry name" value="NOP"/>
    <property type="match status" value="1"/>
</dbReference>
<gene>
    <name type="primary">NOP56</name>
    <name type="synonym">SIK1</name>
    <name type="ordered locus">YLR197W</name>
    <name type="ORF">L8167.9</name>
</gene>